<evidence type="ECO:0000255" key="1">
    <source>
        <dbReference type="PROSITE-ProRule" id="PRU00176"/>
    </source>
</evidence>
<evidence type="ECO:0000255" key="2">
    <source>
        <dbReference type="PROSITE-ProRule" id="PRU00724"/>
    </source>
</evidence>
<evidence type="ECO:0000256" key="3">
    <source>
        <dbReference type="SAM" id="MobiDB-lite"/>
    </source>
</evidence>
<evidence type="ECO:0000269" key="4">
    <source>
    </source>
</evidence>
<evidence type="ECO:0000269" key="5">
    <source>
    </source>
</evidence>
<evidence type="ECO:0000269" key="6">
    <source>
    </source>
</evidence>
<evidence type="ECO:0000303" key="7">
    <source>
    </source>
</evidence>
<evidence type="ECO:0000303" key="8">
    <source>
    </source>
</evidence>
<evidence type="ECO:0000303" key="9">
    <source>
    </source>
</evidence>
<evidence type="ECO:0000303" key="10">
    <source>
    </source>
</evidence>
<evidence type="ECO:0000305" key="11"/>
<evidence type="ECO:0000312" key="12">
    <source>
        <dbReference type="HGNC" id="HGNC:19304"/>
    </source>
</evidence>
<evidence type="ECO:0007744" key="13">
    <source>
    </source>
</evidence>
<evidence type="ECO:0007744" key="14">
    <source>
    </source>
</evidence>
<evidence type="ECO:0007744" key="15">
    <source>
    </source>
</evidence>
<evidence type="ECO:0007744" key="16">
    <source>
    </source>
</evidence>
<evidence type="ECO:0007744" key="17">
    <source>
    </source>
</evidence>
<evidence type="ECO:0007744" key="18">
    <source>
    </source>
</evidence>
<evidence type="ECO:0007744" key="19">
    <source>
    </source>
</evidence>
<evidence type="ECO:0007829" key="20">
    <source>
        <dbReference type="PDB" id="6XKB"/>
    </source>
</evidence>
<reference key="1">
    <citation type="submission" date="1997-08" db="EMBL/GenBank/DDBJ databases">
        <title>Sequence, genomic organization and map localization of the human SR protein gene rA4.</title>
        <authorList>
            <person name="Tassone F."/>
            <person name="Villard L."/>
            <person name="Gardiner K."/>
        </authorList>
    </citation>
    <scope>NUCLEOTIDE SEQUENCE [MRNA] (ISOFORM 1)</scope>
</reference>
<reference key="2">
    <citation type="journal article" date="2004" name="Nat. Genet.">
        <title>Complete sequencing and characterization of 21,243 full-length human cDNAs.</title>
        <authorList>
            <person name="Ota T."/>
            <person name="Suzuki Y."/>
            <person name="Nishikawa T."/>
            <person name="Otsuki T."/>
            <person name="Sugiyama T."/>
            <person name="Irie R."/>
            <person name="Wakamatsu A."/>
            <person name="Hayashi K."/>
            <person name="Sato H."/>
            <person name="Nagai K."/>
            <person name="Kimura K."/>
            <person name="Makita H."/>
            <person name="Sekine M."/>
            <person name="Obayashi M."/>
            <person name="Nishi T."/>
            <person name="Shibahara T."/>
            <person name="Tanaka T."/>
            <person name="Ishii S."/>
            <person name="Yamamoto J."/>
            <person name="Saito K."/>
            <person name="Kawai Y."/>
            <person name="Isono Y."/>
            <person name="Nakamura Y."/>
            <person name="Nagahari K."/>
            <person name="Murakami K."/>
            <person name="Yasuda T."/>
            <person name="Iwayanagi T."/>
            <person name="Wagatsuma M."/>
            <person name="Shiratori A."/>
            <person name="Sudo H."/>
            <person name="Hosoiri T."/>
            <person name="Kaku Y."/>
            <person name="Kodaira H."/>
            <person name="Kondo H."/>
            <person name="Sugawara M."/>
            <person name="Takahashi M."/>
            <person name="Kanda K."/>
            <person name="Yokoi T."/>
            <person name="Furuya T."/>
            <person name="Kikkawa E."/>
            <person name="Omura Y."/>
            <person name="Abe K."/>
            <person name="Kamihara K."/>
            <person name="Katsuta N."/>
            <person name="Sato K."/>
            <person name="Tanikawa M."/>
            <person name="Yamazaki M."/>
            <person name="Ninomiya K."/>
            <person name="Ishibashi T."/>
            <person name="Yamashita H."/>
            <person name="Murakawa K."/>
            <person name="Fujimori K."/>
            <person name="Tanai H."/>
            <person name="Kimata M."/>
            <person name="Watanabe M."/>
            <person name="Hiraoka S."/>
            <person name="Chiba Y."/>
            <person name="Ishida S."/>
            <person name="Ono Y."/>
            <person name="Takiguchi S."/>
            <person name="Watanabe S."/>
            <person name="Yosida M."/>
            <person name="Hotuta T."/>
            <person name="Kusano J."/>
            <person name="Kanehori K."/>
            <person name="Takahashi-Fujii A."/>
            <person name="Hara H."/>
            <person name="Tanase T.-O."/>
            <person name="Nomura Y."/>
            <person name="Togiya S."/>
            <person name="Komai F."/>
            <person name="Hara R."/>
            <person name="Takeuchi K."/>
            <person name="Arita M."/>
            <person name="Imose N."/>
            <person name="Musashino K."/>
            <person name="Yuuki H."/>
            <person name="Oshima A."/>
            <person name="Sasaki N."/>
            <person name="Aotsuka S."/>
            <person name="Yoshikawa Y."/>
            <person name="Matsunawa H."/>
            <person name="Ichihara T."/>
            <person name="Shiohata N."/>
            <person name="Sano S."/>
            <person name="Moriya S."/>
            <person name="Momiyama H."/>
            <person name="Satoh N."/>
            <person name="Takami S."/>
            <person name="Terashima Y."/>
            <person name="Suzuki O."/>
            <person name="Nakagawa S."/>
            <person name="Senoh A."/>
            <person name="Mizoguchi H."/>
            <person name="Goto Y."/>
            <person name="Shimizu F."/>
            <person name="Wakebe H."/>
            <person name="Hishigaki H."/>
            <person name="Watanabe T."/>
            <person name="Sugiyama A."/>
            <person name="Takemoto M."/>
            <person name="Kawakami B."/>
            <person name="Yamazaki M."/>
            <person name="Watanabe K."/>
            <person name="Kumagai A."/>
            <person name="Itakura S."/>
            <person name="Fukuzumi Y."/>
            <person name="Fujimori Y."/>
            <person name="Komiyama M."/>
            <person name="Tashiro H."/>
            <person name="Tanigami A."/>
            <person name="Fujiwara T."/>
            <person name="Ono T."/>
            <person name="Yamada K."/>
            <person name="Fujii Y."/>
            <person name="Ozaki K."/>
            <person name="Hirao M."/>
            <person name="Ohmori Y."/>
            <person name="Kawabata A."/>
            <person name="Hikiji T."/>
            <person name="Kobatake N."/>
            <person name="Inagaki H."/>
            <person name="Ikema Y."/>
            <person name="Okamoto S."/>
            <person name="Okitani R."/>
            <person name="Kawakami T."/>
            <person name="Noguchi S."/>
            <person name="Itoh T."/>
            <person name="Shigeta K."/>
            <person name="Senba T."/>
            <person name="Matsumura K."/>
            <person name="Nakajima Y."/>
            <person name="Mizuno T."/>
            <person name="Morinaga M."/>
            <person name="Sasaki M."/>
            <person name="Togashi T."/>
            <person name="Oyama M."/>
            <person name="Hata H."/>
            <person name="Watanabe M."/>
            <person name="Komatsu T."/>
            <person name="Mizushima-Sugano J."/>
            <person name="Satoh T."/>
            <person name="Shirai Y."/>
            <person name="Takahashi Y."/>
            <person name="Nakagawa K."/>
            <person name="Okumura K."/>
            <person name="Nagase T."/>
            <person name="Nomura N."/>
            <person name="Kikuchi H."/>
            <person name="Masuho Y."/>
            <person name="Yamashita R."/>
            <person name="Nakai K."/>
            <person name="Yada T."/>
            <person name="Nakamura Y."/>
            <person name="Ohara O."/>
            <person name="Isogai T."/>
            <person name="Sugano S."/>
        </authorList>
    </citation>
    <scope>NUCLEOTIDE SEQUENCE [LARGE SCALE MRNA] (ISOFORM 3)</scope>
    <source>
        <tissue>Trachea</tissue>
    </source>
</reference>
<reference key="3">
    <citation type="journal article" date="2007" name="BMC Genomics">
        <title>The full-ORF clone resource of the German cDNA consortium.</title>
        <authorList>
            <person name="Bechtel S."/>
            <person name="Rosenfelder H."/>
            <person name="Duda A."/>
            <person name="Schmidt C.P."/>
            <person name="Ernst U."/>
            <person name="Wellenreuther R."/>
            <person name="Mehrle A."/>
            <person name="Schuster C."/>
            <person name="Bahr A."/>
            <person name="Bloecker H."/>
            <person name="Heubner D."/>
            <person name="Hoerlein A."/>
            <person name="Michel G."/>
            <person name="Wedler H."/>
            <person name="Koehrer K."/>
            <person name="Ottenwaelder B."/>
            <person name="Poustka A."/>
            <person name="Wiemann S."/>
            <person name="Schupp I."/>
        </authorList>
    </citation>
    <scope>NUCLEOTIDE SEQUENCE [LARGE SCALE MRNA] (ISOFORMS 1 AND 2)</scope>
    <source>
        <tissue>Melanoma</tissue>
        <tissue>Testis</tissue>
    </source>
</reference>
<reference key="4">
    <citation type="journal article" date="2000" name="Nature">
        <title>The DNA sequence of human chromosome 21.</title>
        <authorList>
            <person name="Hattori M."/>
            <person name="Fujiyama A."/>
            <person name="Taylor T.D."/>
            <person name="Watanabe H."/>
            <person name="Yada T."/>
            <person name="Park H.-S."/>
            <person name="Toyoda A."/>
            <person name="Ishii K."/>
            <person name="Totoki Y."/>
            <person name="Choi D.-K."/>
            <person name="Groner Y."/>
            <person name="Soeda E."/>
            <person name="Ohki M."/>
            <person name="Takagi T."/>
            <person name="Sakaki Y."/>
            <person name="Taudien S."/>
            <person name="Blechschmidt K."/>
            <person name="Polley A."/>
            <person name="Menzel U."/>
            <person name="Delabar J."/>
            <person name="Kumpf K."/>
            <person name="Lehmann R."/>
            <person name="Patterson D."/>
            <person name="Reichwald K."/>
            <person name="Rump A."/>
            <person name="Schillhabel M."/>
            <person name="Schudy A."/>
            <person name="Zimmermann W."/>
            <person name="Rosenthal A."/>
            <person name="Kudoh J."/>
            <person name="Shibuya K."/>
            <person name="Kawasaki K."/>
            <person name="Asakawa S."/>
            <person name="Shintani A."/>
            <person name="Sasaki T."/>
            <person name="Nagamine K."/>
            <person name="Mitsuyama S."/>
            <person name="Antonarakis S.E."/>
            <person name="Minoshima S."/>
            <person name="Shimizu N."/>
            <person name="Nordsiek G."/>
            <person name="Hornischer K."/>
            <person name="Brandt P."/>
            <person name="Scharfe M."/>
            <person name="Schoen O."/>
            <person name="Desario A."/>
            <person name="Reichelt J."/>
            <person name="Kauer G."/>
            <person name="Bloecker H."/>
            <person name="Ramser J."/>
            <person name="Beck A."/>
            <person name="Klages S."/>
            <person name="Hennig S."/>
            <person name="Riesselmann L."/>
            <person name="Dagand E."/>
            <person name="Wehrmeyer S."/>
            <person name="Borzym K."/>
            <person name="Gardiner K."/>
            <person name="Nizetic D."/>
            <person name="Francis F."/>
            <person name="Lehrach H."/>
            <person name="Reinhardt R."/>
            <person name="Yaspo M.-L."/>
        </authorList>
    </citation>
    <scope>NUCLEOTIDE SEQUENCE [LARGE SCALE GENOMIC DNA]</scope>
</reference>
<reference key="5">
    <citation type="journal article" date="2004" name="Genome Res.">
        <title>The status, quality, and expansion of the NIH full-length cDNA project: the Mammalian Gene Collection (MGC).</title>
        <authorList>
            <consortium name="The MGC Project Team"/>
        </authorList>
    </citation>
    <scope>NUCLEOTIDE SEQUENCE [LARGE SCALE MRNA] (ISOFORM 1)</scope>
    <source>
        <tissue>Brain</tissue>
        <tissue>Uterus</tissue>
    </source>
</reference>
<reference key="6">
    <citation type="journal article" date="1999" name="DNA Res.">
        <title>Characterization of cDNA clones selected by the GeneMark analysis from size-fractionated cDNA libraries from human brain.</title>
        <authorList>
            <person name="Hirosawa M."/>
            <person name="Nagase T."/>
            <person name="Ishikawa K."/>
            <person name="Kikuno R."/>
            <person name="Nomura N."/>
            <person name="Ohara O."/>
        </authorList>
    </citation>
    <scope>NUCLEOTIDE SEQUENCE [LARGE SCALE MRNA] OF 197-1147 (ISOFORM 2)</scope>
    <source>
        <tissue>Brain</tissue>
    </source>
</reference>
<reference key="7">
    <citation type="journal article" date="2006" name="Cell">
        <title>Global, in vivo, and site-specific phosphorylation dynamics in signaling networks.</title>
        <authorList>
            <person name="Olsen J.V."/>
            <person name="Blagoev B."/>
            <person name="Gnad F."/>
            <person name="Macek B."/>
            <person name="Kumar C."/>
            <person name="Mortensen P."/>
            <person name="Mann M."/>
        </authorList>
    </citation>
    <scope>PHOSPHORYLATION [LARGE SCALE ANALYSIS] AT SER-656</scope>
    <scope>IDENTIFICATION BY MASS SPECTROMETRY [LARGE SCALE ANALYSIS]</scope>
    <source>
        <tissue>Cervix carcinoma</tissue>
    </source>
</reference>
<reference key="8">
    <citation type="journal article" date="2008" name="Proc. Natl. Acad. Sci. U.S.A.">
        <title>A quantitative atlas of mitotic phosphorylation.</title>
        <authorList>
            <person name="Dephoure N."/>
            <person name="Zhou C."/>
            <person name="Villen J."/>
            <person name="Beausoleil S.A."/>
            <person name="Bakalarski C.E."/>
            <person name="Elledge S.J."/>
            <person name="Gygi S.P."/>
        </authorList>
    </citation>
    <scope>PHOSPHORYLATION [LARGE SCALE ANALYSIS] AT SER-154</scope>
    <scope>IDENTIFICATION BY MASS SPECTROMETRY [LARGE SCALE ANALYSIS]</scope>
    <source>
        <tissue>Cervix carcinoma</tissue>
    </source>
</reference>
<reference key="9">
    <citation type="journal article" date="2009" name="Anal. Chem.">
        <title>Lys-N and trypsin cover complementary parts of the phosphoproteome in a refined SCX-based approach.</title>
        <authorList>
            <person name="Gauci S."/>
            <person name="Helbig A.O."/>
            <person name="Slijper M."/>
            <person name="Krijgsveld J."/>
            <person name="Heck A.J."/>
            <person name="Mohammed S."/>
        </authorList>
    </citation>
    <scope>IDENTIFICATION BY MASS SPECTROMETRY [LARGE SCALE ANALYSIS]</scope>
</reference>
<reference key="10">
    <citation type="journal article" date="2009" name="Sci. Signal.">
        <title>Quantitative phosphoproteomic analysis of T cell receptor signaling reveals system-wide modulation of protein-protein interactions.</title>
        <authorList>
            <person name="Mayya V."/>
            <person name="Lundgren D.H."/>
            <person name="Hwang S.-I."/>
            <person name="Rezaul K."/>
            <person name="Wu L."/>
            <person name="Eng J.K."/>
            <person name="Rodionov V."/>
            <person name="Han D.K."/>
        </authorList>
    </citation>
    <scope>PHOSPHORYLATION [LARGE SCALE ANALYSIS] AT SER-154</scope>
    <scope>IDENTIFICATION BY MASS SPECTROMETRY [LARGE SCALE ANALYSIS]</scope>
    <source>
        <tissue>Leukemic T-cell</tissue>
    </source>
</reference>
<reference key="11">
    <citation type="journal article" date="2009" name="Science">
        <title>Lysine acetylation targets protein complexes and co-regulates major cellular functions.</title>
        <authorList>
            <person name="Choudhary C."/>
            <person name="Kumar C."/>
            <person name="Gnad F."/>
            <person name="Nielsen M.L."/>
            <person name="Rehman M."/>
            <person name="Walther T.C."/>
            <person name="Olsen J.V."/>
            <person name="Mann M."/>
        </authorList>
    </citation>
    <scope>ACETYLATION [LARGE SCALE ANALYSIS] AT LYS-49</scope>
    <scope>IDENTIFICATION BY MASS SPECTROMETRY [LARGE SCALE ANALYSIS]</scope>
</reference>
<reference key="12">
    <citation type="journal article" date="2010" name="Sci. Signal.">
        <title>Quantitative phosphoproteomics reveals widespread full phosphorylation site occupancy during mitosis.</title>
        <authorList>
            <person name="Olsen J.V."/>
            <person name="Vermeulen M."/>
            <person name="Santamaria A."/>
            <person name="Kumar C."/>
            <person name="Miller M.L."/>
            <person name="Jensen L.J."/>
            <person name="Gnad F."/>
            <person name="Cox J."/>
            <person name="Jensen T.S."/>
            <person name="Nigg E.A."/>
            <person name="Brunak S."/>
            <person name="Mann M."/>
        </authorList>
    </citation>
    <scope>IDENTIFICATION BY MASS SPECTROMETRY [LARGE SCALE ANALYSIS]</scope>
    <source>
        <tissue>Cervix carcinoma</tissue>
    </source>
</reference>
<reference key="13">
    <citation type="journal article" date="2011" name="BMC Syst. Biol.">
        <title>Initial characterization of the human central proteome.</title>
        <authorList>
            <person name="Burkard T.R."/>
            <person name="Planyavsky M."/>
            <person name="Kaupe I."/>
            <person name="Breitwieser F.P."/>
            <person name="Buerckstuemmer T."/>
            <person name="Bennett K.L."/>
            <person name="Superti-Furga G."/>
            <person name="Colinge J."/>
        </authorList>
    </citation>
    <scope>IDENTIFICATION BY MASS SPECTROMETRY [LARGE SCALE ANALYSIS]</scope>
</reference>
<reference key="14">
    <citation type="journal article" date="2011" name="Sci. Signal.">
        <title>System-wide temporal characterization of the proteome and phosphoproteome of human embryonic stem cell differentiation.</title>
        <authorList>
            <person name="Rigbolt K.T."/>
            <person name="Prokhorova T.A."/>
            <person name="Akimov V."/>
            <person name="Henningsen J."/>
            <person name="Johansen P.T."/>
            <person name="Kratchmarova I."/>
            <person name="Kassem M."/>
            <person name="Mann M."/>
            <person name="Olsen J.V."/>
            <person name="Blagoev B."/>
        </authorList>
    </citation>
    <scope>PHOSPHORYLATION [LARGE SCALE ANALYSIS] AT SER-656</scope>
    <scope>IDENTIFICATION BY MASS SPECTROMETRY [LARGE SCALE ANALYSIS]</scope>
</reference>
<reference key="15">
    <citation type="journal article" date="2013" name="J. Proteome Res.">
        <title>Toward a comprehensive characterization of a human cancer cell phosphoproteome.</title>
        <authorList>
            <person name="Zhou H."/>
            <person name="Di Palma S."/>
            <person name="Preisinger C."/>
            <person name="Peng M."/>
            <person name="Polat A.N."/>
            <person name="Heck A.J."/>
            <person name="Mohammed S."/>
        </authorList>
    </citation>
    <scope>PHOSPHORYLATION [LARGE SCALE ANALYSIS] AT SER-154 AND SER-1004</scope>
    <scope>IDENTIFICATION BY MASS SPECTROMETRY [LARGE SCALE ANALYSIS]</scope>
    <source>
        <tissue>Cervix carcinoma</tissue>
        <tissue>Erythroleukemia</tissue>
    </source>
</reference>
<reference key="16">
    <citation type="journal article" date="2014" name="J. Proteomics">
        <title>An enzyme assisted RP-RPLC approach for in-depth analysis of human liver phosphoproteome.</title>
        <authorList>
            <person name="Bian Y."/>
            <person name="Song C."/>
            <person name="Cheng K."/>
            <person name="Dong M."/>
            <person name="Wang F."/>
            <person name="Huang J."/>
            <person name="Sun D."/>
            <person name="Wang L."/>
            <person name="Ye M."/>
            <person name="Zou H."/>
        </authorList>
    </citation>
    <scope>PHOSPHORYLATION [LARGE SCALE ANALYSIS] AT SER-154</scope>
    <scope>IDENTIFICATION BY MASS SPECTROMETRY [LARGE SCALE ANALYSIS]</scope>
    <source>
        <tissue>Liver</tissue>
    </source>
</reference>
<reference key="17">
    <citation type="journal article" date="2019" name="Cell">
        <title>SCAF4 and SCAF8, mRNA anti-terminator proteins.</title>
        <authorList>
            <person name="Gregersen L.H."/>
            <person name="Mitter R."/>
            <person name="Ugalde A.P."/>
            <person name="Nojima T."/>
            <person name="Proudfoot N.J."/>
            <person name="Agami R."/>
            <person name="Stewart A."/>
            <person name="Svejstrup J.Q."/>
        </authorList>
    </citation>
    <scope>FUNCTION</scope>
    <scope>SUBCELLULAR LOCATION</scope>
    <scope>INTERACTION WITH POLR2A</scope>
</reference>
<reference key="18">
    <citation type="journal article" date="2020" name="Am. J. Hum. Genet.">
        <title>Variants in SCAF4 Cause a Neurodevelopmental Disorder and Are Associated with Impaired mRNA Processing.</title>
        <authorList>
            <consortium name="UCLA Clinical Genomics Center"/>
            <person name="Fliedner A."/>
            <person name="Kirchner P."/>
            <person name="Wiesener A."/>
            <person name="van de Beek I."/>
            <person name="Waisfisz Q."/>
            <person name="van Haelst M."/>
            <person name="Scott D.A."/>
            <person name="Lalani S.R."/>
            <person name="Rosenfeld J.A."/>
            <person name="Azamian M.S."/>
            <person name="Xia F."/>
            <person name="Dutra-Clarke M."/>
            <person name="Martinez-Agosto J.A."/>
            <person name="Lee H."/>
            <person name="Noh G.J."/>
            <person name="Lippa N."/>
            <person name="Alkelai A."/>
            <person name="Aggarwal V."/>
            <person name="Agre K.E."/>
            <person name="Gavrilova R."/>
            <person name="Mirzaa G.M."/>
            <person name="Straussberg R."/>
            <person name="Cohen R."/>
            <person name="Horist B."/>
            <person name="Krishnamurthy V."/>
            <person name="McWalter K."/>
            <person name="Juusola J."/>
            <person name="Davis-Keppen L."/>
            <person name="Ohden L."/>
            <person name="van Slegtenhorst M."/>
            <person name="de Man S.A."/>
            <person name="Ekici A.B."/>
            <person name="Gregor A."/>
            <person name="van de Laar I."/>
            <person name="Zweier C."/>
        </authorList>
    </citation>
    <scope>INVOLVEMENT IN FZS</scope>
    <scope>VARIANTS FZS PHE-261; 434-SER--ARG-1147 DEL; 475-ARG--ARG-1147 DEL; 604-TRP--ARG-1147 DEL AND 630-TRP--ARG-1147 DEL</scope>
</reference>
<reference key="19">
    <citation type="journal article" date="2023" name="Am. J. Med. Genet. A">
        <title>SCAF4-related syndromic intellectual disability.</title>
        <authorList>
            <person name="Carvalho L.M.L."/>
            <person name="Pinto C.F."/>
            <person name="de Oliveira Scliar M."/>
            <person name="Otto P.A."/>
            <person name="Krepischi A.C.V."/>
            <person name="Rosenberg C."/>
        </authorList>
    </citation>
    <scope>INVOLVEMENT IN FZS</scope>
</reference>
<comment type="function">
    <text evidence="4">Anti-terminator protein required to prevent early mRNA termination during transcription (PubMed:31104839). Together with SCAF8, acts by suppressing the use of early, alternative poly(A) sites, thereby preventing the accumulation of non-functional truncated proteins (PubMed:31104839). Mechanistically, associates with the phosphorylated C-terminal heptapeptide repeat domain (CTD) of the largest RNA polymerase II subunit (POLR2A), and subsequently binds nascent RNA upstream of early polyadenylation sites to prevent premature mRNA transcript cleavage and polyadenylation (PubMed:31104839). Independently of SCAF8, also acts as a suppressor of transcriptional readthrough (PubMed:31104839).</text>
</comment>
<comment type="subunit">
    <text evidence="4">Interacts with POLR2A; via C-terminal heptapeptide repeat domain (CTD) phosphorylated at 'Ser-2' and 'Ser-5'.</text>
</comment>
<comment type="subcellular location">
    <subcellularLocation>
        <location evidence="4">Nucleus</location>
    </subcellularLocation>
</comment>
<comment type="alternative products">
    <event type="alternative splicing"/>
    <isoform>
        <id>O95104-1</id>
        <name>1</name>
        <sequence type="displayed"/>
    </isoform>
    <isoform>
        <id>O95104-2</id>
        <name>2</name>
        <sequence type="described" ref="VSP_005879"/>
    </isoform>
    <isoform>
        <id>O95104-3</id>
        <name>3</name>
        <sequence type="described" ref="VSP_047351"/>
    </isoform>
</comment>
<comment type="disease" evidence="5 6">
    <disease id="DI-06763">
        <name>Fliedner-Zweier syndrome</name>
        <acronym>FZS</acronym>
        <description>An autosomal dominant neurodevelopmental disorder characterized by variable features including mild intellectual disability, seizures, behavioral abnormalities, and various skeletal and structural anomalies.</description>
        <dbReference type="MIM" id="620511"/>
    </disease>
    <text>The disease is caused by variants affecting the gene represented in this entry.</text>
</comment>
<comment type="sequence caution" evidence="11">
    <conflict type="erroneous initiation">
        <sequence resource="EMBL-CDS" id="AAD09327"/>
    </conflict>
</comment>
<dbReference type="EMBL" id="AF023142">
    <property type="protein sequence ID" value="AAD09327.1"/>
    <property type="status" value="ALT_INIT"/>
    <property type="molecule type" value="mRNA"/>
</dbReference>
<dbReference type="EMBL" id="AK308406">
    <property type="status" value="NOT_ANNOTATED_CDS"/>
    <property type="molecule type" value="mRNA"/>
</dbReference>
<dbReference type="EMBL" id="AL834304">
    <property type="protein sequence ID" value="CAD38974.2"/>
    <property type="molecule type" value="mRNA"/>
</dbReference>
<dbReference type="EMBL" id="AL117417">
    <property type="protein sequence ID" value="CAB55911.1"/>
    <property type="status" value="ALT_SEQ"/>
    <property type="molecule type" value="mRNA"/>
</dbReference>
<dbReference type="EMBL" id="AP001711">
    <property type="status" value="NOT_ANNOTATED_CDS"/>
    <property type="molecule type" value="Genomic_DNA"/>
</dbReference>
<dbReference type="EMBL" id="BC014921">
    <property type="protein sequence ID" value="AAH14921.1"/>
    <property type="molecule type" value="mRNA"/>
</dbReference>
<dbReference type="EMBL" id="BC052286">
    <property type="protein sequence ID" value="AAH52286.1"/>
    <property type="molecule type" value="mRNA"/>
</dbReference>
<dbReference type="EMBL" id="BC064990">
    <property type="protein sequence ID" value="AAH64990.1"/>
    <property type="molecule type" value="mRNA"/>
</dbReference>
<dbReference type="EMBL" id="AB032998">
    <property type="protein sequence ID" value="BAA86486.1"/>
    <property type="molecule type" value="mRNA"/>
</dbReference>
<dbReference type="CCDS" id="CCDS33537.1">
    <molecule id="O95104-1"/>
</dbReference>
<dbReference type="CCDS" id="CCDS46644.1">
    <molecule id="O95104-2"/>
</dbReference>
<dbReference type="CCDS" id="CCDS54482.1">
    <molecule id="O95104-3"/>
</dbReference>
<dbReference type="RefSeq" id="NP_001138916.1">
    <molecule id="O95104-3"/>
    <property type="nucleotide sequence ID" value="NM_001145444.1"/>
</dbReference>
<dbReference type="RefSeq" id="NP_001138917.1">
    <molecule id="O95104-2"/>
    <property type="nucleotide sequence ID" value="NM_001145445.1"/>
</dbReference>
<dbReference type="RefSeq" id="NP_065757.1">
    <molecule id="O95104-1"/>
    <property type="nucleotide sequence ID" value="NM_020706.2"/>
</dbReference>
<dbReference type="PDB" id="6XKB">
    <property type="method" value="X-ray"/>
    <property type="resolution" value="1.60 A"/>
    <property type="chains" value="A/B/C/D/E=1-139"/>
</dbReference>
<dbReference type="PDBsum" id="6XKB"/>
<dbReference type="SMR" id="O95104"/>
<dbReference type="BioGRID" id="121536">
    <property type="interactions" value="144"/>
</dbReference>
<dbReference type="CORUM" id="O95104"/>
<dbReference type="FunCoup" id="O95104">
    <property type="interactions" value="4420"/>
</dbReference>
<dbReference type="IntAct" id="O95104">
    <property type="interactions" value="61"/>
</dbReference>
<dbReference type="MINT" id="O95104"/>
<dbReference type="STRING" id="9606.ENSP00000286835"/>
<dbReference type="GlyCosmos" id="O95104">
    <property type="glycosylation" value="1 site, 1 glycan"/>
</dbReference>
<dbReference type="GlyGen" id="O95104">
    <property type="glycosylation" value="7 sites, 1 O-linked glycan (2 sites)"/>
</dbReference>
<dbReference type="iPTMnet" id="O95104"/>
<dbReference type="PhosphoSitePlus" id="O95104"/>
<dbReference type="BioMuta" id="SCAF4"/>
<dbReference type="jPOST" id="O95104"/>
<dbReference type="MassIVE" id="O95104"/>
<dbReference type="PaxDb" id="9606-ENSP00000286835"/>
<dbReference type="PeptideAtlas" id="O95104"/>
<dbReference type="ProteomicsDB" id="10774"/>
<dbReference type="ProteomicsDB" id="50653">
    <molecule id="O95104-1"/>
</dbReference>
<dbReference type="ProteomicsDB" id="50654">
    <molecule id="O95104-2"/>
</dbReference>
<dbReference type="Pumba" id="O95104"/>
<dbReference type="Antibodypedia" id="6761">
    <property type="antibodies" value="100 antibodies from 24 providers"/>
</dbReference>
<dbReference type="DNASU" id="57466"/>
<dbReference type="Ensembl" id="ENST00000286835.12">
    <molecule id="O95104-1"/>
    <property type="protein sequence ID" value="ENSP00000286835.7"/>
    <property type="gene ID" value="ENSG00000156304.15"/>
</dbReference>
<dbReference type="Ensembl" id="ENST00000399804.5">
    <molecule id="O95104-2"/>
    <property type="protein sequence ID" value="ENSP00000382703.1"/>
    <property type="gene ID" value="ENSG00000156304.15"/>
</dbReference>
<dbReference type="Ensembl" id="ENST00000434667.3">
    <molecule id="O95104-3"/>
    <property type="protein sequence ID" value="ENSP00000402377.2"/>
    <property type="gene ID" value="ENSG00000156304.15"/>
</dbReference>
<dbReference type="GeneID" id="57466"/>
<dbReference type="KEGG" id="hsa:57466"/>
<dbReference type="MANE-Select" id="ENST00000286835.12">
    <property type="protein sequence ID" value="ENSP00000286835.7"/>
    <property type="RefSeq nucleotide sequence ID" value="NM_020706.2"/>
    <property type="RefSeq protein sequence ID" value="NP_065757.1"/>
</dbReference>
<dbReference type="UCSC" id="uc002ypd.3">
    <molecule id="O95104-1"/>
    <property type="organism name" value="human"/>
</dbReference>
<dbReference type="AGR" id="HGNC:19304"/>
<dbReference type="CTD" id="57466"/>
<dbReference type="DisGeNET" id="57466"/>
<dbReference type="GeneCards" id="SCAF4"/>
<dbReference type="HGNC" id="HGNC:19304">
    <property type="gene designation" value="SCAF4"/>
</dbReference>
<dbReference type="HPA" id="ENSG00000156304">
    <property type="expression patterns" value="Low tissue specificity"/>
</dbReference>
<dbReference type="MalaCards" id="SCAF4"/>
<dbReference type="MIM" id="616023">
    <property type="type" value="gene"/>
</dbReference>
<dbReference type="MIM" id="620511">
    <property type="type" value="phenotype"/>
</dbReference>
<dbReference type="neXtProt" id="NX_O95104"/>
<dbReference type="OpenTargets" id="ENSG00000156304"/>
<dbReference type="Orphanet" id="528084">
    <property type="disease" value="Non-specific syndromic intellectual disability"/>
</dbReference>
<dbReference type="PharmGKB" id="PA134903281"/>
<dbReference type="VEuPathDB" id="HostDB:ENSG00000156304"/>
<dbReference type="eggNOG" id="KOG0132">
    <property type="taxonomic scope" value="Eukaryota"/>
</dbReference>
<dbReference type="GeneTree" id="ENSGT00530000063946"/>
<dbReference type="HOGENOM" id="CLU_005263_0_1_1"/>
<dbReference type="InParanoid" id="O95104"/>
<dbReference type="OMA" id="PPQMIAR"/>
<dbReference type="OrthoDB" id="79367at2759"/>
<dbReference type="PAN-GO" id="O95104">
    <property type="GO annotations" value="4 GO annotations based on evolutionary models"/>
</dbReference>
<dbReference type="PhylomeDB" id="O95104"/>
<dbReference type="TreeFam" id="TF324527"/>
<dbReference type="PathwayCommons" id="O95104"/>
<dbReference type="SignaLink" id="O95104"/>
<dbReference type="BioGRID-ORCS" id="57466">
    <property type="hits" value="114 hits in 1169 CRISPR screens"/>
</dbReference>
<dbReference type="ChiTaRS" id="SCAF4">
    <property type="organism name" value="human"/>
</dbReference>
<dbReference type="GenomeRNAi" id="57466"/>
<dbReference type="Pharos" id="O95104">
    <property type="development level" value="Tbio"/>
</dbReference>
<dbReference type="PRO" id="PR:O95104"/>
<dbReference type="Proteomes" id="UP000005640">
    <property type="component" value="Chromosome 21"/>
</dbReference>
<dbReference type="RNAct" id="O95104">
    <property type="molecule type" value="protein"/>
</dbReference>
<dbReference type="Bgee" id="ENSG00000156304">
    <property type="expression patterns" value="Expressed in tendon of biceps brachii and 181 other cell types or tissues"/>
</dbReference>
<dbReference type="GO" id="GO:0005654">
    <property type="term" value="C:nucleoplasm"/>
    <property type="evidence" value="ECO:0000314"/>
    <property type="project" value="HPA"/>
</dbReference>
<dbReference type="GO" id="GO:0005634">
    <property type="term" value="C:nucleus"/>
    <property type="evidence" value="ECO:0000314"/>
    <property type="project" value="UniProtKB"/>
</dbReference>
<dbReference type="GO" id="GO:0003723">
    <property type="term" value="F:RNA binding"/>
    <property type="evidence" value="ECO:0000314"/>
    <property type="project" value="UniProtKB"/>
</dbReference>
<dbReference type="GO" id="GO:1990269">
    <property type="term" value="F:RNA polymerase II C-terminal domain phosphoserine binding"/>
    <property type="evidence" value="ECO:0000314"/>
    <property type="project" value="UniProtKB"/>
</dbReference>
<dbReference type="GO" id="GO:2000805">
    <property type="term" value="P:negative regulation of termination of RNA polymerase II transcription, poly(A)-coupled"/>
    <property type="evidence" value="ECO:0000314"/>
    <property type="project" value="UniProtKB"/>
</dbReference>
<dbReference type="CDD" id="cd17005">
    <property type="entry name" value="CID_SFRS15_SCAF4"/>
    <property type="match status" value="1"/>
</dbReference>
<dbReference type="CDD" id="cd12461">
    <property type="entry name" value="RRM_SCAF4"/>
    <property type="match status" value="1"/>
</dbReference>
<dbReference type="FunFam" id="1.25.40.90:FF:000004">
    <property type="entry name" value="splicing factor, arginine/serine-rich 15"/>
    <property type="match status" value="1"/>
</dbReference>
<dbReference type="FunFam" id="3.30.70.330:FF:000094">
    <property type="entry name" value="SR-related CTD associated factor 8"/>
    <property type="match status" value="1"/>
</dbReference>
<dbReference type="Gene3D" id="1.25.40.90">
    <property type="match status" value="1"/>
</dbReference>
<dbReference type="Gene3D" id="3.30.70.330">
    <property type="match status" value="1"/>
</dbReference>
<dbReference type="InterPro" id="IPR006569">
    <property type="entry name" value="CID_dom"/>
</dbReference>
<dbReference type="InterPro" id="IPR008942">
    <property type="entry name" value="ENTH_VHS"/>
</dbReference>
<dbReference type="InterPro" id="IPR012677">
    <property type="entry name" value="Nucleotide-bd_a/b_plait_sf"/>
</dbReference>
<dbReference type="InterPro" id="IPR035979">
    <property type="entry name" value="RBD_domain_sf"/>
</dbReference>
<dbReference type="InterPro" id="IPR000504">
    <property type="entry name" value="RRM_dom"/>
</dbReference>
<dbReference type="InterPro" id="IPR034369">
    <property type="entry name" value="SCAF4_RRM"/>
</dbReference>
<dbReference type="InterPro" id="IPR051485">
    <property type="entry name" value="SR-CTD_assoc_factor"/>
</dbReference>
<dbReference type="PANTHER" id="PTHR23140">
    <property type="entry name" value="RNA PROCESSING PROTEIN LD23810P"/>
    <property type="match status" value="1"/>
</dbReference>
<dbReference type="PANTHER" id="PTHR23140:SF3">
    <property type="entry name" value="SR-RELATED AND CTD-ASSOCIATED FACTOR 4"/>
    <property type="match status" value="1"/>
</dbReference>
<dbReference type="Pfam" id="PF04818">
    <property type="entry name" value="CID"/>
    <property type="match status" value="1"/>
</dbReference>
<dbReference type="Pfam" id="PF00076">
    <property type="entry name" value="RRM_1"/>
    <property type="match status" value="1"/>
</dbReference>
<dbReference type="PRINTS" id="PR01217">
    <property type="entry name" value="PRICHEXTENSN"/>
</dbReference>
<dbReference type="SMART" id="SM00582">
    <property type="entry name" value="RPR"/>
    <property type="match status" value="1"/>
</dbReference>
<dbReference type="SMART" id="SM00360">
    <property type="entry name" value="RRM"/>
    <property type="match status" value="1"/>
</dbReference>
<dbReference type="SUPFAM" id="SSF48464">
    <property type="entry name" value="ENTH/VHS domain"/>
    <property type="match status" value="1"/>
</dbReference>
<dbReference type="SUPFAM" id="SSF54928">
    <property type="entry name" value="RNA-binding domain, RBD"/>
    <property type="match status" value="1"/>
</dbReference>
<dbReference type="PROSITE" id="PS51391">
    <property type="entry name" value="CID"/>
    <property type="match status" value="1"/>
</dbReference>
<dbReference type="PROSITE" id="PS50102">
    <property type="entry name" value="RRM"/>
    <property type="match status" value="1"/>
</dbReference>
<proteinExistence type="evidence at protein level"/>
<feature type="chain" id="PRO_0000081943" description="SR-related and CTD-associated factor 4">
    <location>
        <begin position="1"/>
        <end position="1147"/>
    </location>
</feature>
<feature type="domain" description="CID" evidence="2">
    <location>
        <begin position="1"/>
        <end position="139"/>
    </location>
</feature>
<feature type="domain" description="RRM" evidence="1">
    <location>
        <begin position="508"/>
        <end position="582"/>
    </location>
</feature>
<feature type="region of interest" description="Disordered" evidence="3">
    <location>
        <begin position="145"/>
        <end position="179"/>
    </location>
</feature>
<feature type="region of interest" description="Disordered" evidence="3">
    <location>
        <begin position="235"/>
        <end position="254"/>
    </location>
</feature>
<feature type="region of interest" description="Disordered" evidence="3">
    <location>
        <begin position="269"/>
        <end position="331"/>
    </location>
</feature>
<feature type="region of interest" description="Disordered" evidence="3">
    <location>
        <begin position="424"/>
        <end position="502"/>
    </location>
</feature>
<feature type="region of interest" description="Disordered" evidence="3">
    <location>
        <begin position="629"/>
        <end position="661"/>
    </location>
</feature>
<feature type="region of interest" description="Disordered" evidence="3">
    <location>
        <begin position="879"/>
        <end position="1147"/>
    </location>
</feature>
<feature type="compositionally biased region" description="Low complexity" evidence="3">
    <location>
        <begin position="283"/>
        <end position="292"/>
    </location>
</feature>
<feature type="compositionally biased region" description="Low complexity" evidence="3">
    <location>
        <begin position="299"/>
        <end position="310"/>
    </location>
</feature>
<feature type="compositionally biased region" description="Basic and acidic residues" evidence="3">
    <location>
        <begin position="424"/>
        <end position="433"/>
    </location>
</feature>
<feature type="compositionally biased region" description="Basic residues" evidence="3">
    <location>
        <begin position="434"/>
        <end position="475"/>
    </location>
</feature>
<feature type="compositionally biased region" description="Basic and acidic residues" evidence="3">
    <location>
        <begin position="477"/>
        <end position="492"/>
    </location>
</feature>
<feature type="compositionally biased region" description="Pro residues" evidence="3">
    <location>
        <begin position="879"/>
        <end position="913"/>
    </location>
</feature>
<feature type="compositionally biased region" description="Low complexity" evidence="3">
    <location>
        <begin position="941"/>
        <end position="965"/>
    </location>
</feature>
<feature type="compositionally biased region" description="Pro residues" evidence="3">
    <location>
        <begin position="966"/>
        <end position="977"/>
    </location>
</feature>
<feature type="compositionally biased region" description="Basic and acidic residues" evidence="3">
    <location>
        <begin position="1009"/>
        <end position="1085"/>
    </location>
</feature>
<feature type="modified residue" description="N6-acetyllysine" evidence="15">
    <location>
        <position position="49"/>
    </location>
</feature>
<feature type="modified residue" description="Phosphoserine" evidence="14 16 18 19">
    <location>
        <position position="154"/>
    </location>
</feature>
<feature type="modified residue" description="Phosphoserine" evidence="13 17">
    <location>
        <position position="656"/>
    </location>
</feature>
<feature type="modified residue" description="Phosphoserine" evidence="18">
    <location>
        <position position="1004"/>
    </location>
</feature>
<feature type="splice variant" id="VSP_047351" description="In isoform 3." evidence="8">
    <location>
        <begin position="38"/>
        <end position="52"/>
    </location>
</feature>
<feature type="splice variant" id="VSP_005879" description="In isoform 2." evidence="7 9">
    <original>STIAGINEDTTKDLSIGNPIPTV</original>
    <variation>L</variation>
    <location>
        <begin position="766"/>
        <end position="788"/>
    </location>
</feature>
<feature type="sequence variant" id="VAR_088993" description="In FZS; uncertain significance." evidence="5">
    <original>L</original>
    <variation>F</variation>
    <location>
        <position position="261"/>
    </location>
</feature>
<feature type="sequence variant" id="VAR_088994" description="In FZS; likely pathogenic." evidence="5">
    <location>
        <begin position="434"/>
        <end position="1147"/>
    </location>
</feature>
<feature type="sequence variant" id="VAR_088995" description="In FZS; likely pathogenic." evidence="5">
    <location>
        <begin position="475"/>
        <end position="1147"/>
    </location>
</feature>
<feature type="sequence variant" id="VAR_088996" description="In FZS; likely pathogenic." evidence="5">
    <location>
        <begin position="604"/>
        <end position="1147"/>
    </location>
</feature>
<feature type="sequence variant" id="VAR_088997" description="In FZS; likely pathogenic." evidence="5">
    <location>
        <begin position="630"/>
        <end position="1147"/>
    </location>
</feature>
<feature type="sequence variant" id="VAR_052234" description="In dbSNP:rs12152067.">
    <original>S</original>
    <variation>Y</variation>
    <location>
        <position position="846"/>
    </location>
</feature>
<feature type="sequence conflict" description="In Ref. 1; AAD09327." evidence="11" ref="1">
    <original>M</original>
    <variation>W</variation>
    <location>
        <position position="1"/>
    </location>
</feature>
<feature type="sequence conflict" description="In Ref. 3; CAB55911." evidence="11" ref="3">
    <location>
        <begin position="260"/>
        <end position="264"/>
    </location>
</feature>
<feature type="sequence conflict" description="In Ref. 1; AAD09327." evidence="11" ref="1">
    <original>T</original>
    <variation>I</variation>
    <location>
        <position position="283"/>
    </location>
</feature>
<feature type="sequence conflict" description="In Ref. 1; AAD09327." evidence="11" ref="1">
    <original>T</original>
    <variation>A</variation>
    <location>
        <position position="286"/>
    </location>
</feature>
<feature type="sequence conflict" description="In Ref. 1; AAD09327." evidence="11" ref="1">
    <original>T</original>
    <variation>A</variation>
    <location>
        <position position="299"/>
    </location>
</feature>
<feature type="sequence conflict" description="In Ref. 6; BAA86486." evidence="11" ref="6">
    <original>V</original>
    <variation>L</variation>
    <location>
        <position position="302"/>
    </location>
</feature>
<feature type="sequence conflict" description="In Ref. 1; AAD09327." evidence="11" ref="1">
    <original>H</original>
    <variation>Y</variation>
    <location>
        <position position="552"/>
    </location>
</feature>
<feature type="sequence conflict" description="In Ref. 1; AAD09327." evidence="11" ref="1">
    <original>L</original>
    <variation>V</variation>
    <location>
        <position position="560"/>
    </location>
</feature>
<feature type="sequence conflict" description="In Ref. 1." evidence="11" ref="1">
    <original>N</original>
    <variation>T</variation>
    <location>
        <position position="571"/>
    </location>
</feature>
<feature type="sequence conflict" description="In Ref. 1; AAD09327." evidence="11" ref="1">
    <original>GVT</original>
    <variation>CVI</variation>
    <location>
        <begin position="598"/>
        <end position="600"/>
    </location>
</feature>
<feature type="sequence conflict" description="In Ref. 1; AAD09327." evidence="11" ref="1">
    <original>WDK</original>
    <variation>CDN</variation>
    <location>
        <begin position="604"/>
        <end position="606"/>
    </location>
</feature>
<feature type="sequence conflict" description="In Ref. 1; AAD09327." evidence="11" ref="1">
    <original>L</original>
    <variation>M</variation>
    <location>
        <position position="612"/>
    </location>
</feature>
<feature type="sequence conflict" description="In Ref. 1; AAD09327." evidence="11" ref="1">
    <original>C</original>
    <variation>Y</variation>
    <location>
        <position position="616"/>
    </location>
</feature>
<feature type="sequence conflict" description="In Ref. 3; AK308406." evidence="11" ref="3">
    <original>D</original>
    <variation>N</variation>
    <location>
        <position position="624"/>
    </location>
</feature>
<feature type="sequence conflict" description="In Ref. 1; AAD09327." evidence="11" ref="1">
    <original>AVPPAAPTNLPTPPVTQPV</original>
    <variation>TCCTHESAHPSCNPACLPC</variation>
    <location>
        <begin position="808"/>
        <end position="826"/>
    </location>
</feature>
<feature type="sequence conflict" description="In Ref. 1; AAD09327." evidence="11" ref="1">
    <original>A</original>
    <variation>E</variation>
    <location>
        <position position="844"/>
    </location>
</feature>
<feature type="sequence conflict" description="In Ref. 1." evidence="11" ref="1">
    <original>S</original>
    <variation>G</variation>
    <location>
        <position position="1139"/>
    </location>
</feature>
<feature type="helix" evidence="20">
    <location>
        <begin position="1"/>
        <end position="12"/>
    </location>
</feature>
<feature type="helix" evidence="20">
    <location>
        <begin position="13"/>
        <end position="16"/>
    </location>
</feature>
<feature type="helix" evidence="20">
    <location>
        <begin position="23"/>
        <end position="35"/>
    </location>
</feature>
<feature type="helix" evidence="20">
    <location>
        <begin position="37"/>
        <end position="39"/>
    </location>
</feature>
<feature type="helix" evidence="20">
    <location>
        <begin position="40"/>
        <end position="53"/>
    </location>
</feature>
<feature type="helix" evidence="20">
    <location>
        <begin position="56"/>
        <end position="58"/>
    </location>
</feature>
<feature type="helix" evidence="20">
    <location>
        <begin position="59"/>
        <end position="77"/>
    </location>
</feature>
<feature type="turn" evidence="20">
    <location>
        <begin position="79"/>
        <end position="81"/>
    </location>
</feature>
<feature type="helix" evidence="20">
    <location>
        <begin position="84"/>
        <end position="89"/>
    </location>
</feature>
<feature type="helix" evidence="20">
    <location>
        <begin position="92"/>
        <end position="99"/>
    </location>
</feature>
<feature type="helix" evidence="20">
    <location>
        <begin position="104"/>
        <end position="106"/>
    </location>
</feature>
<feature type="helix" evidence="20">
    <location>
        <begin position="107"/>
        <end position="119"/>
    </location>
</feature>
<feature type="helix" evidence="20">
    <location>
        <begin position="125"/>
        <end position="134"/>
    </location>
</feature>
<keyword id="KW-0002">3D-structure</keyword>
<keyword id="KW-0007">Acetylation</keyword>
<keyword id="KW-0025">Alternative splicing</keyword>
<keyword id="KW-0225">Disease variant</keyword>
<keyword id="KW-0887">Epilepsy</keyword>
<keyword id="KW-0991">Intellectual disability</keyword>
<keyword id="KW-0539">Nucleus</keyword>
<keyword id="KW-0597">Phosphoprotein</keyword>
<keyword id="KW-1267">Proteomics identification</keyword>
<keyword id="KW-1185">Reference proteome</keyword>
<keyword id="KW-0694">RNA-binding</keyword>
<keyword id="KW-0804">Transcription</keyword>
<keyword id="KW-0805">Transcription regulation</keyword>
<sequence length="1147" mass="125869">MDAVNAFNQELFSLMDMKPPISRAKMILITKAAIKAIKLYKHVVQIVEKFIKKCKPEYKVPGLYVIDSIVRQSRHQFGTDKDVFGPRFSKNITATFQYLYLCPSEDKSKIVRVLNLWQKNGVFKIEIIQPLLDMAAGTSNAAPVAENVTNNEGSPPPPVKVSSEPPTQATPNSVPAVPQLPSSDAFAAVAQLFQTTQGQQLQQILQTFQQPPKPQSPALDNAVMAQVQAITAQLKTTPTQPSEQKAAFPPPEQKTAFDKKLLDRFDYDDEPEAVEESKKEDTTAVTTTAPAAAVPPAPTATVPAAAAPAAASPPPPQAPFGFPGDGMQQPAYTQHQNMDQFQPRMMGIQQDPMHHQVPLPPNGQMPGFGLLPTPPFPPMAQPVIPPTPPVQQPFQASFQAQNEPLTQKPHQQEMEVEQPCIQEVKRHMSDNRKSRSRSASRSPKRRRSRSGSRSRRSRHRRSRSRSRDRRRHSPRSRSQERRDREKERERRQKGLPQVKPETASVCSTTLWVGQLDKRTTQQDVASLLEEFGPIESINMIPPRGCAYIVMVHRQDAYRALQKLSRGNYKVNQKSIKIAWALNKGIKADYKQYWDVELGVTYIPWDKVKPEELESFCEGGMLDSDTLNPDWKGIPKKPENEVAQNGGAETSHTEPVSPIPKPLPVPVPPIPVPAPITVPPPQVPPHQPGPPVVGALQPPAFTPPLGIPPPGFGPGVPPPPPPPPFLRPGFNPMHLPPGFLPPGPPPPITPPVSIPPPHTPPISIPNSTIAGINEDTTKDLSIGNPIPTVVSGARGNAESGDSVKMYGSAVPPAAPTNLPTPPVTQPVSLLGTQGVAPGPVIGLQAPSTGLLGARPGLIPLQRPPGMPPPHLQRFPLMPPRPMPPHMMHRGPPPGPGGFAMPPPHGMKGPFPPHGPFVRPGGMPGLGGPGPGPGGPEDRDGRQQPPQQPQQQPQPQAPQQPQQQQQQQPPPSQQPPPTQQQPQQFRNDNRQQFNSGRDQERFGRRSFGNRVENDRERYGNRNDDRDNSNRDRREWGRRSPDRDRHRDLEERNRRSSGHRDRERDSRDRESRREKEEARGKEKPEVTDRAGGNKTVEPPISQVGNVDTASELEKGVSEAAVLKPSEELPAEATSSVEPEKDSGSAAEAPR</sequence>
<organism>
    <name type="scientific">Homo sapiens</name>
    <name type="common">Human</name>
    <dbReference type="NCBI Taxonomy" id="9606"/>
    <lineage>
        <taxon>Eukaryota</taxon>
        <taxon>Metazoa</taxon>
        <taxon>Chordata</taxon>
        <taxon>Craniata</taxon>
        <taxon>Vertebrata</taxon>
        <taxon>Euteleostomi</taxon>
        <taxon>Mammalia</taxon>
        <taxon>Eutheria</taxon>
        <taxon>Euarchontoglires</taxon>
        <taxon>Primates</taxon>
        <taxon>Haplorrhini</taxon>
        <taxon>Catarrhini</taxon>
        <taxon>Hominidae</taxon>
        <taxon>Homo</taxon>
    </lineage>
</organism>
<name>SCAF4_HUMAN</name>
<accession>O95104</accession>
<accession>C9JLZ0</accession>
<accession>Q0P5W8</accession>
<accession>Q6P1M5</accession>
<accession>Q8N3I8</accession>
<accession>Q9UFM1</accession>
<accession>Q9ULP8</accession>
<gene>
    <name evidence="10 12" type="primary">SCAF4</name>
    <name evidence="7" type="synonym">KIAA1172</name>
    <name evidence="12" type="synonym">SFRS15</name>
</gene>
<protein>
    <recommendedName>
        <fullName evidence="10">SR-related and CTD-associated factor 4</fullName>
    </recommendedName>
    <alternativeName>
        <fullName evidence="11">CTD-binding SR-like protein RA4</fullName>
    </alternativeName>
    <alternativeName>
        <fullName evidence="11">Splicing factor, arginine/serine-rich 15</fullName>
    </alternativeName>
</protein>